<keyword id="KW-0274">FAD</keyword>
<keyword id="KW-0285">Flavoprotein</keyword>
<keyword id="KW-0560">Oxidoreductase</keyword>
<protein>
    <recommendedName>
        <fullName evidence="1">D-amino acid dehydrogenase</fullName>
        <ecNumber evidence="1">1.4.99.-</ecNumber>
    </recommendedName>
</protein>
<dbReference type="EC" id="1.4.99.-" evidence="1"/>
<dbReference type="EMBL" id="CP001489">
    <property type="protein sequence ID" value="ACO02701.1"/>
    <property type="molecule type" value="Genomic_DNA"/>
</dbReference>
<dbReference type="RefSeq" id="WP_002965723.1">
    <property type="nucleotide sequence ID" value="NC_012442.1"/>
</dbReference>
<dbReference type="SMR" id="C0RM68"/>
<dbReference type="KEGG" id="bmi:BMEA_B0906"/>
<dbReference type="HOGENOM" id="CLU_007884_9_2_5"/>
<dbReference type="UniPathway" id="UPA00043">
    <property type="reaction ID" value="UER00498"/>
</dbReference>
<dbReference type="Proteomes" id="UP000001748">
    <property type="component" value="Chromosome II"/>
</dbReference>
<dbReference type="GO" id="GO:0005737">
    <property type="term" value="C:cytoplasm"/>
    <property type="evidence" value="ECO:0007669"/>
    <property type="project" value="TreeGrafter"/>
</dbReference>
<dbReference type="GO" id="GO:0005886">
    <property type="term" value="C:plasma membrane"/>
    <property type="evidence" value="ECO:0007669"/>
    <property type="project" value="TreeGrafter"/>
</dbReference>
<dbReference type="GO" id="GO:0008718">
    <property type="term" value="F:D-amino-acid dehydrogenase activity"/>
    <property type="evidence" value="ECO:0007669"/>
    <property type="project" value="UniProtKB-UniRule"/>
</dbReference>
<dbReference type="GO" id="GO:0055130">
    <property type="term" value="P:D-alanine catabolic process"/>
    <property type="evidence" value="ECO:0007669"/>
    <property type="project" value="UniProtKB-UniPathway"/>
</dbReference>
<dbReference type="FunFam" id="3.50.50.60:FF:000020">
    <property type="entry name" value="D-amino acid dehydrogenase"/>
    <property type="match status" value="1"/>
</dbReference>
<dbReference type="Gene3D" id="3.30.9.10">
    <property type="entry name" value="D-Amino Acid Oxidase, subunit A, domain 2"/>
    <property type="match status" value="1"/>
</dbReference>
<dbReference type="Gene3D" id="3.50.50.60">
    <property type="entry name" value="FAD/NAD(P)-binding domain"/>
    <property type="match status" value="2"/>
</dbReference>
<dbReference type="HAMAP" id="MF_01202">
    <property type="entry name" value="DadA"/>
    <property type="match status" value="1"/>
</dbReference>
<dbReference type="InterPro" id="IPR023080">
    <property type="entry name" value="DadA"/>
</dbReference>
<dbReference type="InterPro" id="IPR006076">
    <property type="entry name" value="FAD-dep_OxRdtase"/>
</dbReference>
<dbReference type="InterPro" id="IPR036188">
    <property type="entry name" value="FAD/NAD-bd_sf"/>
</dbReference>
<dbReference type="NCBIfam" id="NF001933">
    <property type="entry name" value="PRK00711.1"/>
    <property type="match status" value="1"/>
</dbReference>
<dbReference type="PANTHER" id="PTHR13847:SF280">
    <property type="entry name" value="D-AMINO ACID DEHYDROGENASE"/>
    <property type="match status" value="1"/>
</dbReference>
<dbReference type="PANTHER" id="PTHR13847">
    <property type="entry name" value="SARCOSINE DEHYDROGENASE-RELATED"/>
    <property type="match status" value="1"/>
</dbReference>
<dbReference type="Pfam" id="PF01266">
    <property type="entry name" value="DAO"/>
    <property type="match status" value="1"/>
</dbReference>
<dbReference type="SUPFAM" id="SSF54373">
    <property type="entry name" value="FAD-linked reductases, C-terminal domain"/>
    <property type="match status" value="1"/>
</dbReference>
<dbReference type="SUPFAM" id="SSF51905">
    <property type="entry name" value="FAD/NAD(P)-binding domain"/>
    <property type="match status" value="1"/>
</dbReference>
<organism>
    <name type="scientific">Brucella melitensis biotype 2 (strain ATCC 23457)</name>
    <dbReference type="NCBI Taxonomy" id="546272"/>
    <lineage>
        <taxon>Bacteria</taxon>
        <taxon>Pseudomonadati</taxon>
        <taxon>Pseudomonadota</taxon>
        <taxon>Alphaproteobacteria</taxon>
        <taxon>Hyphomicrobiales</taxon>
        <taxon>Brucellaceae</taxon>
        <taxon>Brucella/Ochrobactrum group</taxon>
        <taxon>Brucella</taxon>
    </lineage>
</organism>
<feature type="chain" id="PRO_1000164638" description="D-amino acid dehydrogenase">
    <location>
        <begin position="1"/>
        <end position="416"/>
    </location>
</feature>
<feature type="binding site" evidence="1">
    <location>
        <begin position="3"/>
        <end position="17"/>
    </location>
    <ligand>
        <name>FAD</name>
        <dbReference type="ChEBI" id="CHEBI:57692"/>
    </ligand>
</feature>
<proteinExistence type="inferred from homology"/>
<evidence type="ECO:0000255" key="1">
    <source>
        <dbReference type="HAMAP-Rule" id="MF_01202"/>
    </source>
</evidence>
<reference key="1">
    <citation type="submission" date="2009-03" db="EMBL/GenBank/DDBJ databases">
        <title>Brucella melitensis ATCC 23457 whole genome shotgun sequencing project.</title>
        <authorList>
            <person name="Setubal J.C."/>
            <person name="Boyle S."/>
            <person name="Crasta O.R."/>
            <person name="Gillespie J.J."/>
            <person name="Kenyon R.W."/>
            <person name="Lu J."/>
            <person name="Mane S."/>
            <person name="Nagrani S."/>
            <person name="Shallom J.M."/>
            <person name="Shallom S."/>
            <person name="Shukla M."/>
            <person name="Snyder E.E."/>
            <person name="Sobral B.W."/>
            <person name="Wattam A.R."/>
            <person name="Will R."/>
            <person name="Williams K."/>
            <person name="Yoo H."/>
            <person name="Munk C."/>
            <person name="Tapia R."/>
            <person name="Han C."/>
            <person name="Detter J.C."/>
            <person name="Bruce D."/>
            <person name="Brettin T.S."/>
        </authorList>
    </citation>
    <scope>NUCLEOTIDE SEQUENCE [LARGE SCALE GENOMIC DNA]</scope>
    <source>
        <strain>ATCC 23457</strain>
    </source>
</reference>
<name>DADA_BRUMB</name>
<sequence length="416" mass="45110">MQITILGSGVIGVTTAYYLAKLGHEVTVIDREEGPALETSFANAGQVSPGYASPWAAPGIPLKAAKWLFQKHAPLILRLTTDPVQYRWLLQMLANCTDSRYKINKTRMVRVAEYSRDCLIELRKDTGIEYDQRSQGTLQLFREQYQLDGIGKDIEVLRQDGVPFEVLDRDGCVNVEPALAHAKDKFVGGLRLPNDETGDCFKFTNALAKIAEGLGVKFRFGVNIKSLLMSGGKISGVETSEGIVTAERYVVALGSYTPALIKALGLNAPIYPVKGYSITAPIVDESRAPVSTVLDESYKIAITRLGDRIRVGGMAEVSGFTDDLPAARRATLDLSVTDLFPGGDLKAATFWSGLRPMTPDSTPIIGGTRYDNLFINAGHGTLGWTMACGSGRLLADLISGNKADIRADDLGIARYN</sequence>
<comment type="function">
    <text evidence="1">Oxidative deamination of D-amino acids.</text>
</comment>
<comment type="catalytic activity">
    <reaction evidence="1">
        <text>a D-alpha-amino acid + A + H2O = a 2-oxocarboxylate + AH2 + NH4(+)</text>
        <dbReference type="Rhea" id="RHEA:18125"/>
        <dbReference type="ChEBI" id="CHEBI:13193"/>
        <dbReference type="ChEBI" id="CHEBI:15377"/>
        <dbReference type="ChEBI" id="CHEBI:17499"/>
        <dbReference type="ChEBI" id="CHEBI:28938"/>
        <dbReference type="ChEBI" id="CHEBI:35179"/>
        <dbReference type="ChEBI" id="CHEBI:59871"/>
    </reaction>
</comment>
<comment type="cofactor">
    <cofactor evidence="1">
        <name>FAD</name>
        <dbReference type="ChEBI" id="CHEBI:57692"/>
    </cofactor>
</comment>
<comment type="pathway">
    <text>Amino-acid degradation; D-alanine degradation; NH(3) and pyruvate from D-alanine: step 1/1.</text>
</comment>
<comment type="similarity">
    <text evidence="1">Belongs to the DadA oxidoreductase family.</text>
</comment>
<accession>C0RM68</accession>
<gene>
    <name evidence="1" type="primary">dadA</name>
    <name type="ordered locus">BMEA_B0906</name>
</gene>